<evidence type="ECO:0000250" key="1">
    <source>
        <dbReference type="UniProtKB" id="Q9KJY8"/>
    </source>
</evidence>
<evidence type="ECO:0000255" key="2"/>
<evidence type="ECO:0000269" key="3">
    <source>
    </source>
</evidence>
<evidence type="ECO:0000303" key="4">
    <source>
    </source>
</evidence>
<evidence type="ECO:0000305" key="5"/>
<evidence type="ECO:0000312" key="6">
    <source>
        <dbReference type="EMBL" id="BAC49850.1"/>
    </source>
</evidence>
<organism>
    <name type="scientific">Bradyrhizobium diazoefficiens (strain JCM 10833 / BCRC 13528 / IAM 13628 / NBRC 14792 / USDA 110)</name>
    <dbReference type="NCBI Taxonomy" id="224911"/>
    <lineage>
        <taxon>Bacteria</taxon>
        <taxon>Pseudomonadati</taxon>
        <taxon>Pseudomonadota</taxon>
        <taxon>Alphaproteobacteria</taxon>
        <taxon>Hyphomicrobiales</taxon>
        <taxon>Nitrobacteraceae</taxon>
        <taxon>Bradyrhizobium</taxon>
    </lineage>
</organism>
<proteinExistence type="evidence at protein level"/>
<protein>
    <recommendedName>
        <fullName evidence="4 6">Phosphatidylcholine synthase</fullName>
        <shortName evidence="1">PC synthase</shortName>
        <shortName evidence="4">PCS</shortName>
        <ecNumber evidence="3">2.7.8.24</ecNumber>
    </recommendedName>
    <alternativeName>
        <fullName evidence="1">CDP-diglyceride-choline O-phosphatidyltransferase</fullName>
    </alternativeName>
</protein>
<feature type="chain" id="PRO_0000425218" description="Phosphatidylcholine synthase">
    <location>
        <begin position="1"/>
        <end position="267"/>
    </location>
</feature>
<feature type="topological domain" description="Cytoplasmic" evidence="1 2">
    <location>
        <begin position="1"/>
        <end position="42"/>
    </location>
</feature>
<feature type="transmembrane region" description="Helical; Name=1" evidence="2">
    <location>
        <begin position="43"/>
        <end position="63"/>
    </location>
</feature>
<feature type="topological domain" description="Periplasmic" evidence="2">
    <location>
        <begin position="64"/>
        <end position="69"/>
    </location>
</feature>
<feature type="transmembrane region" description="Helical; Name=2" evidence="2">
    <location>
        <begin position="70"/>
        <end position="90"/>
    </location>
</feature>
<feature type="topological domain" description="Cytoplasmic" evidence="2">
    <location>
        <begin position="91"/>
        <end position="102"/>
    </location>
</feature>
<feature type="transmembrane region" description="Helical; Name=3" evidence="2">
    <location>
        <begin position="103"/>
        <end position="123"/>
    </location>
</feature>
<feature type="topological domain" description="Periplasmic" evidence="2">
    <location>
        <position position="124"/>
    </location>
</feature>
<feature type="transmembrane region" description="Helical; Name=4" evidence="2">
    <location>
        <begin position="125"/>
        <end position="145"/>
    </location>
</feature>
<feature type="topological domain" description="Cytoplasmic" evidence="2">
    <location>
        <begin position="146"/>
        <end position="162"/>
    </location>
</feature>
<feature type="transmembrane region" description="Helical; Name=5" evidence="2">
    <location>
        <begin position="163"/>
        <end position="183"/>
    </location>
</feature>
<feature type="topological domain" description="Periplasmic" evidence="2">
    <location>
        <position position="184"/>
    </location>
</feature>
<feature type="transmembrane region" description="Helical; Name=6" evidence="2">
    <location>
        <begin position="185"/>
        <end position="205"/>
    </location>
</feature>
<feature type="topological domain" description="Cytoplasmic" evidence="2">
    <location>
        <begin position="206"/>
        <end position="215"/>
    </location>
</feature>
<feature type="transmembrane region" description="Helical; Name=7" evidence="2">
    <location>
        <begin position="216"/>
        <end position="236"/>
    </location>
</feature>
<feature type="topological domain" description="Periplasmic" evidence="2">
    <location>
        <begin position="237"/>
        <end position="239"/>
    </location>
</feature>
<feature type="transmembrane region" description="Helical; Name=8" evidence="2">
    <location>
        <begin position="240"/>
        <end position="260"/>
    </location>
</feature>
<feature type="topological domain" description="Cytoplasmic" evidence="1 2">
    <location>
        <begin position="261"/>
        <end position="267"/>
    </location>
</feature>
<gene>
    <name evidence="6" type="primary">pcs</name>
    <name type="ordered locus">bll4585</name>
</gene>
<name>PCS_BRADU</name>
<comment type="function">
    <text evidence="3">Condenses choline with CDP-diglyceride to produce phosphatidylcholine and CMP.</text>
</comment>
<comment type="catalytic activity">
    <reaction evidence="3">
        <text>a CDP-1,2-diacyl-sn-glycerol + choline = a 1,2-diacyl-sn-glycero-3-phosphocholine + CMP + H(+)</text>
        <dbReference type="Rhea" id="RHEA:14597"/>
        <dbReference type="ChEBI" id="CHEBI:15354"/>
        <dbReference type="ChEBI" id="CHEBI:15378"/>
        <dbReference type="ChEBI" id="CHEBI:57643"/>
        <dbReference type="ChEBI" id="CHEBI:58332"/>
        <dbReference type="ChEBI" id="CHEBI:60377"/>
        <dbReference type="EC" id="2.7.8.24"/>
    </reaction>
</comment>
<comment type="cofactor">
    <cofactor evidence="1">
        <name>Mn(2+)</name>
        <dbReference type="ChEBI" id="CHEBI:29035"/>
    </cofactor>
</comment>
<comment type="subcellular location">
    <subcellularLocation>
        <location evidence="1">Cell inner membrane</location>
        <topology evidence="1">Multi-pass membrane protein</topology>
    </subcellularLocation>
</comment>
<comment type="similarity">
    <text evidence="2">Belongs to the CDP-alcohol phosphatidyltransferase class-I family.</text>
</comment>
<sequence>MILWRIVRPGAAMAYVQTGLVLIAEAMDTQQDSLKPRPAMRAAAFSVHVFTAFGAAIALLAMLEAVREHWAAMFQWLGVALIIDAIDGPIARRLDVKNVQPNWSGDVLDLVVDFVTYVFVPAYAIVASGLLLPVAAPLLGVAIIVTSALYFADLRMKADDNHFRGFPALWNAAAFYLFLLHWPPLWSTLLVAALVVLTFVPFHVLHPVRVVRLRWLTMSLIGIWAVLSLYTLDMDFRVGPGVTLALCAIALWISFSDALIRFARSFA</sequence>
<keyword id="KW-0997">Cell inner membrane</keyword>
<keyword id="KW-1003">Cell membrane</keyword>
<keyword id="KW-0444">Lipid biosynthesis</keyword>
<keyword id="KW-0443">Lipid metabolism</keyword>
<keyword id="KW-0464">Manganese</keyword>
<keyword id="KW-0472">Membrane</keyword>
<keyword id="KW-0594">Phospholipid biosynthesis</keyword>
<keyword id="KW-1208">Phospholipid metabolism</keyword>
<keyword id="KW-1185">Reference proteome</keyword>
<keyword id="KW-0808">Transferase</keyword>
<keyword id="KW-0812">Transmembrane</keyword>
<keyword id="KW-1133">Transmembrane helix</keyword>
<reference evidence="6" key="1">
    <citation type="journal article" date="2002" name="DNA Res.">
        <title>Complete genomic sequence of nitrogen-fixing symbiotic bacterium Bradyrhizobium japonicum USDA110.</title>
        <authorList>
            <person name="Kaneko T."/>
            <person name="Nakamura Y."/>
            <person name="Sato S."/>
            <person name="Minamisawa K."/>
            <person name="Uchiumi T."/>
            <person name="Sasamoto S."/>
            <person name="Watanabe A."/>
            <person name="Idesawa K."/>
            <person name="Iriguchi M."/>
            <person name="Kawashima K."/>
            <person name="Kohara M."/>
            <person name="Matsumoto M."/>
            <person name="Shimpo S."/>
            <person name="Tsuruoka H."/>
            <person name="Wada T."/>
            <person name="Yamada M."/>
            <person name="Tabata S."/>
        </authorList>
    </citation>
    <scope>NUCLEOTIDE SEQUENCE [LARGE SCALE GENOMIC DNA]</scope>
    <source>
        <strain>JCM 10833 / BCRC 13528 / IAM 13628 / NBRC 14792 / USDA 110</strain>
    </source>
</reference>
<reference evidence="5" key="2">
    <citation type="journal article" date="2003" name="Microbiology">
        <title>Pathways for phosphatidylcholine biosynthesis in bacteria.</title>
        <authorList>
            <person name="Martinez-Morales F."/>
            <person name="Schobert M."/>
            <person name="Lopez-Lara I.M."/>
            <person name="Geiger O."/>
        </authorList>
    </citation>
    <scope>FUNCTION</scope>
    <scope>CATALYTIC ACTIVITY</scope>
    <source>
        <strain evidence="3">USDA 110spc4</strain>
    </source>
</reference>
<dbReference type="EC" id="2.7.8.24" evidence="3"/>
<dbReference type="EMBL" id="BA000040">
    <property type="protein sequence ID" value="BAC49850.1"/>
    <property type="molecule type" value="Genomic_DNA"/>
</dbReference>
<dbReference type="RefSeq" id="NP_771225.1">
    <property type="nucleotide sequence ID" value="NC_004463.1"/>
</dbReference>
<dbReference type="SMR" id="Q89LF9"/>
<dbReference type="STRING" id="224911.AAV28_20155"/>
<dbReference type="EnsemblBacteria" id="BAC49850">
    <property type="protein sequence ID" value="BAC49850"/>
    <property type="gene ID" value="BAC49850"/>
</dbReference>
<dbReference type="KEGG" id="bja:bll4585"/>
<dbReference type="PATRIC" id="fig|224911.5.peg.4650"/>
<dbReference type="eggNOG" id="COG1183">
    <property type="taxonomic scope" value="Bacteria"/>
</dbReference>
<dbReference type="HOGENOM" id="CLU_086279_0_0_5"/>
<dbReference type="InParanoid" id="Q89LF9"/>
<dbReference type="OrthoDB" id="350520at2"/>
<dbReference type="PhylomeDB" id="Q89LF9"/>
<dbReference type="Proteomes" id="UP000002526">
    <property type="component" value="Chromosome"/>
</dbReference>
<dbReference type="GO" id="GO:0005886">
    <property type="term" value="C:plasma membrane"/>
    <property type="evidence" value="ECO:0007669"/>
    <property type="project" value="UniProtKB-SubCell"/>
</dbReference>
<dbReference type="GO" id="GO:0050520">
    <property type="term" value="F:phosphatidylcholine synthase activity"/>
    <property type="evidence" value="ECO:0000314"/>
    <property type="project" value="UniProtKB"/>
</dbReference>
<dbReference type="GO" id="GO:0008654">
    <property type="term" value="P:phospholipid biosynthetic process"/>
    <property type="evidence" value="ECO:0000314"/>
    <property type="project" value="UniProtKB"/>
</dbReference>
<dbReference type="FunFam" id="1.20.120.1760:FF:000009">
    <property type="entry name" value="Phosphatidylcholine synthase"/>
    <property type="match status" value="1"/>
</dbReference>
<dbReference type="Gene3D" id="1.20.120.1760">
    <property type="match status" value="1"/>
</dbReference>
<dbReference type="InterPro" id="IPR000462">
    <property type="entry name" value="CDP-OH_P_trans"/>
</dbReference>
<dbReference type="InterPro" id="IPR043130">
    <property type="entry name" value="CDP-OH_PTrfase_TM_dom"/>
</dbReference>
<dbReference type="InterPro" id="IPR026027">
    <property type="entry name" value="PcS"/>
</dbReference>
<dbReference type="NCBIfam" id="NF045888">
    <property type="entry name" value="PhCholSynBrdy"/>
    <property type="match status" value="1"/>
</dbReference>
<dbReference type="Pfam" id="PF01066">
    <property type="entry name" value="CDP-OH_P_transf"/>
    <property type="match status" value="1"/>
</dbReference>
<dbReference type="PIRSF" id="PIRSF000851">
    <property type="entry name" value="PcS"/>
    <property type="match status" value="1"/>
</dbReference>
<accession>Q89LF9</accession>